<proteinExistence type="inferred from homology"/>
<reference key="1">
    <citation type="journal article" date="2001" name="Proc. Natl. Acad. Sci. U.S.A.">
        <title>Analysis of the chromosome sequence of the legume symbiont Sinorhizobium meliloti strain 1021.</title>
        <authorList>
            <person name="Capela D."/>
            <person name="Barloy-Hubler F."/>
            <person name="Gouzy J."/>
            <person name="Bothe G."/>
            <person name="Ampe F."/>
            <person name="Batut J."/>
            <person name="Boistard P."/>
            <person name="Becker A."/>
            <person name="Boutry M."/>
            <person name="Cadieu E."/>
            <person name="Dreano S."/>
            <person name="Gloux S."/>
            <person name="Godrie T."/>
            <person name="Goffeau A."/>
            <person name="Kahn D."/>
            <person name="Kiss E."/>
            <person name="Lelaure V."/>
            <person name="Masuy D."/>
            <person name="Pohl T."/>
            <person name="Portetelle D."/>
            <person name="Puehler A."/>
            <person name="Purnelle B."/>
            <person name="Ramsperger U."/>
            <person name="Renard C."/>
            <person name="Thebault P."/>
            <person name="Vandenbol M."/>
            <person name="Weidner S."/>
            <person name="Galibert F."/>
        </authorList>
    </citation>
    <scope>NUCLEOTIDE SEQUENCE [LARGE SCALE GENOMIC DNA]</scope>
    <source>
        <strain>1021</strain>
    </source>
</reference>
<reference key="2">
    <citation type="journal article" date="2001" name="Science">
        <title>The composite genome of the legume symbiont Sinorhizobium meliloti.</title>
        <authorList>
            <person name="Galibert F."/>
            <person name="Finan T.M."/>
            <person name="Long S.R."/>
            <person name="Puehler A."/>
            <person name="Abola P."/>
            <person name="Ampe F."/>
            <person name="Barloy-Hubler F."/>
            <person name="Barnett M.J."/>
            <person name="Becker A."/>
            <person name="Boistard P."/>
            <person name="Bothe G."/>
            <person name="Boutry M."/>
            <person name="Bowser L."/>
            <person name="Buhrmester J."/>
            <person name="Cadieu E."/>
            <person name="Capela D."/>
            <person name="Chain P."/>
            <person name="Cowie A."/>
            <person name="Davis R.W."/>
            <person name="Dreano S."/>
            <person name="Federspiel N.A."/>
            <person name="Fisher R.F."/>
            <person name="Gloux S."/>
            <person name="Godrie T."/>
            <person name="Goffeau A."/>
            <person name="Golding B."/>
            <person name="Gouzy J."/>
            <person name="Gurjal M."/>
            <person name="Hernandez-Lucas I."/>
            <person name="Hong A."/>
            <person name="Huizar L."/>
            <person name="Hyman R.W."/>
            <person name="Jones T."/>
            <person name="Kahn D."/>
            <person name="Kahn M.L."/>
            <person name="Kalman S."/>
            <person name="Keating D.H."/>
            <person name="Kiss E."/>
            <person name="Komp C."/>
            <person name="Lelaure V."/>
            <person name="Masuy D."/>
            <person name="Palm C."/>
            <person name="Peck M.C."/>
            <person name="Pohl T.M."/>
            <person name="Portetelle D."/>
            <person name="Purnelle B."/>
            <person name="Ramsperger U."/>
            <person name="Surzycki R."/>
            <person name="Thebault P."/>
            <person name="Vandenbol M."/>
            <person name="Vorhoelter F.J."/>
            <person name="Weidner S."/>
            <person name="Wells D.H."/>
            <person name="Wong K."/>
            <person name="Yeh K.-C."/>
            <person name="Batut J."/>
        </authorList>
    </citation>
    <scope>NUCLEOTIDE SEQUENCE [LARGE SCALE GENOMIC DNA]</scope>
    <source>
        <strain>1021</strain>
    </source>
</reference>
<gene>
    <name evidence="1" type="primary">rpmG</name>
    <name type="ordered locus">R01295</name>
    <name type="ORF">SMc01369</name>
</gene>
<dbReference type="EMBL" id="AL591688">
    <property type="protein sequence ID" value="CAC45874.1"/>
    <property type="molecule type" value="Genomic_DNA"/>
</dbReference>
<dbReference type="RefSeq" id="NP_385401.1">
    <property type="nucleotide sequence ID" value="NC_003047.1"/>
</dbReference>
<dbReference type="RefSeq" id="WP_003537640.1">
    <property type="nucleotide sequence ID" value="NC_003047.1"/>
</dbReference>
<dbReference type="SMR" id="Q92QM4"/>
<dbReference type="EnsemblBacteria" id="CAC45874">
    <property type="protein sequence ID" value="CAC45874"/>
    <property type="gene ID" value="SMc01369"/>
</dbReference>
<dbReference type="GeneID" id="89575618"/>
<dbReference type="KEGG" id="sme:SMc01369"/>
<dbReference type="PATRIC" id="fig|266834.11.peg.2709"/>
<dbReference type="eggNOG" id="COG0267">
    <property type="taxonomic scope" value="Bacteria"/>
</dbReference>
<dbReference type="HOGENOM" id="CLU_190949_1_1_5"/>
<dbReference type="Proteomes" id="UP000001976">
    <property type="component" value="Chromosome"/>
</dbReference>
<dbReference type="GO" id="GO:0022625">
    <property type="term" value="C:cytosolic large ribosomal subunit"/>
    <property type="evidence" value="ECO:0007669"/>
    <property type="project" value="TreeGrafter"/>
</dbReference>
<dbReference type="GO" id="GO:0003735">
    <property type="term" value="F:structural constituent of ribosome"/>
    <property type="evidence" value="ECO:0007669"/>
    <property type="project" value="InterPro"/>
</dbReference>
<dbReference type="GO" id="GO:0006412">
    <property type="term" value="P:translation"/>
    <property type="evidence" value="ECO:0007669"/>
    <property type="project" value="UniProtKB-UniRule"/>
</dbReference>
<dbReference type="Gene3D" id="2.20.28.120">
    <property type="entry name" value="Ribosomal protein L33"/>
    <property type="match status" value="1"/>
</dbReference>
<dbReference type="HAMAP" id="MF_00294">
    <property type="entry name" value="Ribosomal_bL33"/>
    <property type="match status" value="1"/>
</dbReference>
<dbReference type="InterPro" id="IPR001705">
    <property type="entry name" value="Ribosomal_bL33"/>
</dbReference>
<dbReference type="InterPro" id="IPR018264">
    <property type="entry name" value="Ribosomal_bL33_CS"/>
</dbReference>
<dbReference type="InterPro" id="IPR038584">
    <property type="entry name" value="Ribosomal_bL33_sf"/>
</dbReference>
<dbReference type="InterPro" id="IPR011332">
    <property type="entry name" value="Ribosomal_zn-bd"/>
</dbReference>
<dbReference type="NCBIfam" id="NF001860">
    <property type="entry name" value="PRK00595.1"/>
    <property type="match status" value="1"/>
</dbReference>
<dbReference type="NCBIfam" id="TIGR01023">
    <property type="entry name" value="rpmG_bact"/>
    <property type="match status" value="1"/>
</dbReference>
<dbReference type="PANTHER" id="PTHR15238">
    <property type="entry name" value="54S RIBOSOMAL PROTEIN L39, MITOCHONDRIAL"/>
    <property type="match status" value="1"/>
</dbReference>
<dbReference type="PANTHER" id="PTHR15238:SF1">
    <property type="entry name" value="LARGE RIBOSOMAL SUBUNIT PROTEIN BL33M"/>
    <property type="match status" value="1"/>
</dbReference>
<dbReference type="Pfam" id="PF00471">
    <property type="entry name" value="Ribosomal_L33"/>
    <property type="match status" value="1"/>
</dbReference>
<dbReference type="SUPFAM" id="SSF57829">
    <property type="entry name" value="Zn-binding ribosomal proteins"/>
    <property type="match status" value="1"/>
</dbReference>
<dbReference type="PROSITE" id="PS00582">
    <property type="entry name" value="RIBOSOMAL_L33"/>
    <property type="match status" value="1"/>
</dbReference>
<comment type="similarity">
    <text evidence="1">Belongs to the bacterial ribosomal protein bL33 family.</text>
</comment>
<organism>
    <name type="scientific">Rhizobium meliloti (strain 1021)</name>
    <name type="common">Ensifer meliloti</name>
    <name type="synonym">Sinorhizobium meliloti</name>
    <dbReference type="NCBI Taxonomy" id="266834"/>
    <lineage>
        <taxon>Bacteria</taxon>
        <taxon>Pseudomonadati</taxon>
        <taxon>Pseudomonadota</taxon>
        <taxon>Alphaproteobacteria</taxon>
        <taxon>Hyphomicrobiales</taxon>
        <taxon>Rhizobiaceae</taxon>
        <taxon>Sinorhizobium/Ensifer group</taxon>
        <taxon>Sinorhizobium</taxon>
    </lineage>
</organism>
<evidence type="ECO:0000255" key="1">
    <source>
        <dbReference type="HAMAP-Rule" id="MF_00294"/>
    </source>
</evidence>
<evidence type="ECO:0000305" key="2"/>
<feature type="chain" id="PRO_0000170204" description="Large ribosomal subunit protein bL33">
    <location>
        <begin position="1"/>
        <end position="55"/>
    </location>
</feature>
<protein>
    <recommendedName>
        <fullName evidence="1">Large ribosomal subunit protein bL33</fullName>
    </recommendedName>
    <alternativeName>
        <fullName evidence="2">50S ribosomal protein L33</fullName>
    </alternativeName>
</protein>
<name>RL33_RHIME</name>
<accession>Q92QM4</accession>
<keyword id="KW-1185">Reference proteome</keyword>
<keyword id="KW-0687">Ribonucleoprotein</keyword>
<keyword id="KW-0689">Ribosomal protein</keyword>
<sequence length="55" mass="6302">MAKATTIKIKLLSTADTGYFYVTTKNSRTMTDKMTKTKYDPVAKKHVEFKEAKIK</sequence>